<dbReference type="EC" id="1.14.99.48" evidence="1"/>
<dbReference type="EMBL" id="AP009351">
    <property type="protein sequence ID" value="BAF66383.1"/>
    <property type="molecule type" value="Genomic_DNA"/>
</dbReference>
<dbReference type="RefSeq" id="WP_000480603.1">
    <property type="nucleotide sequence ID" value="NZ_JBBIAE010000003.1"/>
</dbReference>
<dbReference type="SMR" id="A6QDF1"/>
<dbReference type="KEGG" id="sae:NWMN_0111"/>
<dbReference type="HOGENOM" id="CLU_141544_2_1_9"/>
<dbReference type="Proteomes" id="UP000006386">
    <property type="component" value="Chromosome"/>
</dbReference>
<dbReference type="GO" id="GO:0005737">
    <property type="term" value="C:cytoplasm"/>
    <property type="evidence" value="ECO:0007669"/>
    <property type="project" value="UniProtKB-SubCell"/>
</dbReference>
<dbReference type="GO" id="GO:0020037">
    <property type="term" value="F:heme binding"/>
    <property type="evidence" value="ECO:0007669"/>
    <property type="project" value="UniProtKB-UniRule"/>
</dbReference>
<dbReference type="GO" id="GO:0004392">
    <property type="term" value="F:heme oxygenase (decyclizing) activity"/>
    <property type="evidence" value="ECO:0007669"/>
    <property type="project" value="UniProtKB-UniRule"/>
</dbReference>
<dbReference type="GO" id="GO:0005506">
    <property type="term" value="F:iron ion binding"/>
    <property type="evidence" value="ECO:0007669"/>
    <property type="project" value="UniProtKB-UniRule"/>
</dbReference>
<dbReference type="GO" id="GO:0042167">
    <property type="term" value="P:heme catabolic process"/>
    <property type="evidence" value="ECO:0007669"/>
    <property type="project" value="UniProtKB-UniRule"/>
</dbReference>
<dbReference type="GO" id="GO:0033212">
    <property type="term" value="P:iron import into cell"/>
    <property type="evidence" value="ECO:0007669"/>
    <property type="project" value="InterPro"/>
</dbReference>
<dbReference type="Gene3D" id="3.30.70.100">
    <property type="match status" value="1"/>
</dbReference>
<dbReference type="HAMAP" id="MF_01272">
    <property type="entry name" value="Heme_degrading_monooxygenase"/>
    <property type="match status" value="1"/>
</dbReference>
<dbReference type="InterPro" id="IPR007138">
    <property type="entry name" value="ABM_dom"/>
</dbReference>
<dbReference type="InterPro" id="IPR011008">
    <property type="entry name" value="Dimeric_a/b-barrel"/>
</dbReference>
<dbReference type="InterPro" id="IPR050404">
    <property type="entry name" value="Heme-degrading_MO"/>
</dbReference>
<dbReference type="InterPro" id="IPR023953">
    <property type="entry name" value="IsdG"/>
</dbReference>
<dbReference type="NCBIfam" id="NF009838">
    <property type="entry name" value="PRK13313.1"/>
    <property type="match status" value="1"/>
</dbReference>
<dbReference type="PANTHER" id="PTHR34474:SF4">
    <property type="entry name" value="HEME OXYGENASE (STAPHYLOBILIN-PRODUCING) 1"/>
    <property type="match status" value="1"/>
</dbReference>
<dbReference type="PANTHER" id="PTHR34474">
    <property type="entry name" value="SIGNAL TRANSDUCTION PROTEIN TRAP"/>
    <property type="match status" value="1"/>
</dbReference>
<dbReference type="Pfam" id="PF03992">
    <property type="entry name" value="ABM"/>
    <property type="match status" value="1"/>
</dbReference>
<dbReference type="SUPFAM" id="SSF54909">
    <property type="entry name" value="Dimeric alpha+beta barrel"/>
    <property type="match status" value="1"/>
</dbReference>
<dbReference type="PROSITE" id="PS51725">
    <property type="entry name" value="ABM"/>
    <property type="match status" value="1"/>
</dbReference>
<reference key="1">
    <citation type="journal article" date="2008" name="J. Bacteriol.">
        <title>Genome sequence of Staphylococcus aureus strain Newman and comparative analysis of staphylococcal genomes: polymorphism and evolution of two major pathogenicity islands.</title>
        <authorList>
            <person name="Baba T."/>
            <person name="Bae T."/>
            <person name="Schneewind O."/>
            <person name="Takeuchi F."/>
            <person name="Hiramatsu K."/>
        </authorList>
    </citation>
    <scope>NUCLEOTIDE SEQUENCE [LARGE SCALE GENOMIC DNA]</scope>
    <source>
        <strain>Newman</strain>
    </source>
</reference>
<reference key="2">
    <citation type="journal article" date="2008" name="Mol. Microbiol.">
        <title>Staphylococcus aureus haem oxygenases are differentially regulated by iron and haem.</title>
        <authorList>
            <person name="Reniere M.L."/>
            <person name="Skaar E.P."/>
        </authorList>
    </citation>
    <scope>FUNCTION</scope>
    <scope>INDUCTION</scope>
</reference>
<protein>
    <recommendedName>
        <fullName evidence="1">Heme oxygenase (staphylobilin-producing) 2</fullName>
        <ecNumber evidence="1">1.14.99.48</ecNumber>
    </recommendedName>
    <alternativeName>
        <fullName evidence="1">Heme-degrading monooxygenase 2</fullName>
    </alternativeName>
    <alternativeName>
        <fullName evidence="1">Iron-regulated surface determinant 2</fullName>
    </alternativeName>
    <alternativeName>
        <fullName evidence="1">Iron-responsive surface determinant 2</fullName>
    </alternativeName>
</protein>
<organism>
    <name type="scientific">Staphylococcus aureus (strain Newman)</name>
    <dbReference type="NCBI Taxonomy" id="426430"/>
    <lineage>
        <taxon>Bacteria</taxon>
        <taxon>Bacillati</taxon>
        <taxon>Bacillota</taxon>
        <taxon>Bacilli</taxon>
        <taxon>Bacillales</taxon>
        <taxon>Staphylococcaceae</taxon>
        <taxon>Staphylococcus</taxon>
    </lineage>
</organism>
<accession>A6QDF1</accession>
<name>HDOX2_STAAE</name>
<keyword id="KW-0963">Cytoplasm</keyword>
<keyword id="KW-0349">Heme</keyword>
<keyword id="KW-0408">Iron</keyword>
<keyword id="KW-0479">Metal-binding</keyword>
<keyword id="KW-0503">Monooxygenase</keyword>
<keyword id="KW-0560">Oxidoreductase</keyword>
<sequence length="108" mass="12791">MFMAENRLQLQKGSAEETIERFYNRQGIETIEGFQQMFVTKTLNTEDTDEVKILTIWESEDSFNNWLNSDVFKEAHKNVRLKSDDDGQQSPILSNKVFKYDIGYHYQK</sequence>
<feature type="chain" id="PRO_0000421866" description="Heme oxygenase (staphylobilin-producing) 2">
    <location>
        <begin position="1"/>
        <end position="108"/>
    </location>
</feature>
<feature type="domain" description="ABM" evidence="1">
    <location>
        <begin position="2"/>
        <end position="93"/>
    </location>
</feature>
<feature type="binding site" evidence="1">
    <location>
        <position position="6"/>
    </location>
    <ligand>
        <name>Fe cation</name>
        <dbReference type="ChEBI" id="CHEBI:24875"/>
    </ligand>
</feature>
<feature type="binding site" evidence="1">
    <location>
        <begin position="21"/>
        <end position="28"/>
    </location>
    <ligand>
        <name>heme</name>
        <dbReference type="ChEBI" id="CHEBI:30413"/>
    </ligand>
</feature>
<feature type="binding site" description="axial binding residue" evidence="1">
    <location>
        <position position="76"/>
    </location>
    <ligand>
        <name>heme</name>
        <dbReference type="ChEBI" id="CHEBI:30413"/>
    </ligand>
    <ligandPart>
        <name>Fe</name>
        <dbReference type="ChEBI" id="CHEBI:18248"/>
    </ligandPart>
</feature>
<feature type="site" description="Transition state stabilizer" evidence="1">
    <location>
        <position position="66"/>
    </location>
</feature>
<comment type="function">
    <text evidence="1 2">Allows bacterial pathogens to use the host heme as an iron source. Catalyzes the oxidative degradation of the heme macrocyclic porphyrin ring to the oxo-bilirubin chromophore staphylobilin (a mixture of the linear tetrapyrroles 5-oxo-delta-bilirubin and 15-oxo-beta-bilirubin) in the presence of a suitable electron donor such as ascorbate or NADPH--cytochrome P450 reductase, with subsequent release of free iron.</text>
</comment>
<comment type="catalytic activity">
    <reaction evidence="1">
        <text>heme b + 5 AH2 + 4 O2 + 2 H(+) = delta-staphylobilin + Fe(2+) + formaldehyde + 5 A + 4 H2O</text>
        <dbReference type="Rhea" id="RHEA:37039"/>
        <dbReference type="ChEBI" id="CHEBI:13193"/>
        <dbReference type="ChEBI" id="CHEBI:15377"/>
        <dbReference type="ChEBI" id="CHEBI:15378"/>
        <dbReference type="ChEBI" id="CHEBI:15379"/>
        <dbReference type="ChEBI" id="CHEBI:16842"/>
        <dbReference type="ChEBI" id="CHEBI:17499"/>
        <dbReference type="ChEBI" id="CHEBI:29033"/>
        <dbReference type="ChEBI" id="CHEBI:60344"/>
        <dbReference type="ChEBI" id="CHEBI:74361"/>
        <dbReference type="EC" id="1.14.99.48"/>
    </reaction>
</comment>
<comment type="catalytic activity">
    <reaction evidence="1">
        <text>heme b + 5 AH2 + 4 O2 + 2 H(+) = beta-staphylobilin + Fe(2+) + formaldehyde + 5 A + 4 H2O</text>
        <dbReference type="Rhea" id="RHEA:37363"/>
        <dbReference type="ChEBI" id="CHEBI:13193"/>
        <dbReference type="ChEBI" id="CHEBI:15377"/>
        <dbReference type="ChEBI" id="CHEBI:15378"/>
        <dbReference type="ChEBI" id="CHEBI:15379"/>
        <dbReference type="ChEBI" id="CHEBI:16842"/>
        <dbReference type="ChEBI" id="CHEBI:17499"/>
        <dbReference type="ChEBI" id="CHEBI:29033"/>
        <dbReference type="ChEBI" id="CHEBI:60344"/>
        <dbReference type="ChEBI" id="CHEBI:74362"/>
        <dbReference type="EC" id="1.14.99.48"/>
    </reaction>
</comment>
<comment type="subunit">
    <text evidence="1">Homodimer.</text>
</comment>
<comment type="subcellular location">
    <subcellularLocation>
        <location evidence="1">Cytoplasm</location>
    </subcellularLocation>
</comment>
<comment type="induction">
    <text evidence="2">Regulated by iron in a Fur-dependent manner.</text>
</comment>
<comment type="similarity">
    <text evidence="1">Belongs to the antibiotic biosynthesis monooxygenase family. Heme-degrading monooxygenase IsdG subfamily.</text>
</comment>
<evidence type="ECO:0000255" key="1">
    <source>
        <dbReference type="HAMAP-Rule" id="MF_01272"/>
    </source>
</evidence>
<evidence type="ECO:0000269" key="2">
    <source>
    </source>
</evidence>
<proteinExistence type="evidence at transcript level"/>
<gene>
    <name type="primary">isdI</name>
    <name type="ordered locus">NWMN_0111</name>
</gene>